<evidence type="ECO:0000250" key="1"/>
<evidence type="ECO:0000255" key="2"/>
<evidence type="ECO:0000305" key="3"/>
<organism>
    <name type="scientific">Acanthamoeba polyphaga mimivirus</name>
    <name type="common">APMV</name>
    <dbReference type="NCBI Taxonomy" id="212035"/>
    <lineage>
        <taxon>Viruses</taxon>
        <taxon>Varidnaviria</taxon>
        <taxon>Bamfordvirae</taxon>
        <taxon>Nucleocytoviricota</taxon>
        <taxon>Megaviricetes</taxon>
        <taxon>Imitervirales</taxon>
        <taxon>Mimiviridae</taxon>
        <taxon>Megamimivirinae</taxon>
        <taxon>Mimivirus</taxon>
        <taxon>Mimivirus bradfordmassiliense</taxon>
    </lineage>
</organism>
<gene>
    <name type="ordered locus">MIMI_L499</name>
</gene>
<organismHost>
    <name type="scientific">Acanthamoeba polyphaga</name>
    <name type="common">Amoeba</name>
    <dbReference type="NCBI Taxonomy" id="5757"/>
</organismHost>
<reference key="1">
    <citation type="journal article" date="2004" name="Science">
        <title>The 1.2-megabase genome sequence of Mimivirus.</title>
        <authorList>
            <person name="Raoult D."/>
            <person name="Audic S."/>
            <person name="Robert C."/>
            <person name="Abergel C."/>
            <person name="Renesto P."/>
            <person name="Ogata H."/>
            <person name="La Scola B."/>
            <person name="Susan M."/>
            <person name="Claverie J.-M."/>
        </authorList>
    </citation>
    <scope>NUCLEOTIDE SEQUENCE [LARGE SCALE GENOMIC DNA]</scope>
    <source>
        <strain>Rowbotham-Bradford</strain>
    </source>
</reference>
<proteinExistence type="inferred from homology"/>
<feature type="chain" id="PRO_0000244774" description="Putative replication factor C small subunit L499">
    <location>
        <begin position="1"/>
        <end position="344"/>
    </location>
</feature>
<feature type="binding site" evidence="2">
    <location>
        <begin position="57"/>
        <end position="64"/>
    </location>
    <ligand>
        <name>ATP</name>
        <dbReference type="ChEBI" id="CHEBI:30616"/>
    </ligand>
</feature>
<name>RFCS3_MIMIV</name>
<keyword id="KW-0067">ATP-binding</keyword>
<keyword id="KW-0235">DNA replication</keyword>
<keyword id="KW-0547">Nucleotide-binding</keyword>
<keyword id="KW-1185">Reference proteome</keyword>
<sequence length="344" mass="39203">MSYYETIASRTEPKKQLPWVEKYRPQEIDHIISNRDIILSLKKFIESRTLPHLLFFGPSGSGKTSTIKCCAREIYGKYINYMILELNASNERGIETVRTKIKNFVSSKSSIFLPMGVRDIFKLVILDEIDSMTVEAQGMLRQTIEKNSGTTRFCLICNDIDKINIALQSRCASFRFSPLNELDMHGRLSDICRLEGVKYEKEAINSIIKISKGDMRSAINTLQHVNLVIGGSINTEDVYKISGHCMPEIVTDVFDILFSLNKNKTKSLKKSVNDIITIVTENNITIFNLLEELKNIVMESKFTTSQKIFLIDNFAKTEMYDSVNVDSNNILMILACLFVFVNNV</sequence>
<comment type="function">
    <text evidence="1">Part of the RFC clamp loader complex which loads the PCNA sliding clamp onto DNA.</text>
</comment>
<comment type="similarity">
    <text evidence="3">Belongs to the activator 1 small subunits family. RfcS subfamily.</text>
</comment>
<accession>Q5UP47</accession>
<protein>
    <recommendedName>
        <fullName>Putative replication factor C small subunit L499</fullName>
        <shortName>RFC small subunit L499</shortName>
    </recommendedName>
    <alternativeName>
        <fullName>Clamp loader small subunit L499</fullName>
    </alternativeName>
</protein>
<dbReference type="EMBL" id="AY653733">
    <property type="protein sequence ID" value="AAV50764.1"/>
    <property type="molecule type" value="Genomic_DNA"/>
</dbReference>
<dbReference type="SMR" id="Q5UP47"/>
<dbReference type="KEGG" id="vg:9925130"/>
<dbReference type="OrthoDB" id="4962at10239"/>
<dbReference type="Proteomes" id="UP000001134">
    <property type="component" value="Genome"/>
</dbReference>
<dbReference type="GO" id="GO:0005524">
    <property type="term" value="F:ATP binding"/>
    <property type="evidence" value="ECO:0007669"/>
    <property type="project" value="UniProtKB-KW"/>
</dbReference>
<dbReference type="GO" id="GO:0016887">
    <property type="term" value="F:ATP hydrolysis activity"/>
    <property type="evidence" value="ECO:0007669"/>
    <property type="project" value="InterPro"/>
</dbReference>
<dbReference type="GO" id="GO:0003689">
    <property type="term" value="F:DNA clamp loader activity"/>
    <property type="evidence" value="ECO:0007669"/>
    <property type="project" value="TreeGrafter"/>
</dbReference>
<dbReference type="GO" id="GO:0006281">
    <property type="term" value="P:DNA repair"/>
    <property type="evidence" value="ECO:0007669"/>
    <property type="project" value="TreeGrafter"/>
</dbReference>
<dbReference type="GO" id="GO:0006261">
    <property type="term" value="P:DNA-templated DNA replication"/>
    <property type="evidence" value="ECO:0007669"/>
    <property type="project" value="TreeGrafter"/>
</dbReference>
<dbReference type="CDD" id="cd00009">
    <property type="entry name" value="AAA"/>
    <property type="match status" value="1"/>
</dbReference>
<dbReference type="CDD" id="cd18140">
    <property type="entry name" value="HLD_clamp_RFC"/>
    <property type="match status" value="1"/>
</dbReference>
<dbReference type="FunFam" id="3.40.50.300:FF:000952">
    <property type="entry name" value="Replication factor C subunit 2"/>
    <property type="match status" value="1"/>
</dbReference>
<dbReference type="Gene3D" id="1.10.8.60">
    <property type="match status" value="1"/>
</dbReference>
<dbReference type="Gene3D" id="3.40.50.300">
    <property type="entry name" value="P-loop containing nucleotide triphosphate hydrolases"/>
    <property type="match status" value="1"/>
</dbReference>
<dbReference type="InterPro" id="IPR003593">
    <property type="entry name" value="AAA+_ATPase"/>
</dbReference>
<dbReference type="InterPro" id="IPR003959">
    <property type="entry name" value="ATPase_AAA_core"/>
</dbReference>
<dbReference type="InterPro" id="IPR050238">
    <property type="entry name" value="DNA_Rep/Repair_Clamp_Loader"/>
</dbReference>
<dbReference type="InterPro" id="IPR027417">
    <property type="entry name" value="P-loop_NTPase"/>
</dbReference>
<dbReference type="InterPro" id="IPR047854">
    <property type="entry name" value="RFC_lid"/>
</dbReference>
<dbReference type="PANTHER" id="PTHR11669">
    <property type="entry name" value="REPLICATION FACTOR C / DNA POLYMERASE III GAMMA-TAU SUBUNIT"/>
    <property type="match status" value="1"/>
</dbReference>
<dbReference type="PANTHER" id="PTHR11669:SF20">
    <property type="entry name" value="REPLICATION FACTOR C SUBUNIT 4"/>
    <property type="match status" value="1"/>
</dbReference>
<dbReference type="Pfam" id="PF00004">
    <property type="entry name" value="AAA"/>
    <property type="match status" value="1"/>
</dbReference>
<dbReference type="Pfam" id="PF21960">
    <property type="entry name" value="RCF1-5-like_lid"/>
    <property type="match status" value="1"/>
</dbReference>
<dbReference type="SMART" id="SM00382">
    <property type="entry name" value="AAA"/>
    <property type="match status" value="1"/>
</dbReference>
<dbReference type="SUPFAM" id="SSF52540">
    <property type="entry name" value="P-loop containing nucleoside triphosphate hydrolases"/>
    <property type="match status" value="1"/>
</dbReference>